<keyword id="KW-0167">Capsid protein</keyword>
<keyword id="KW-1153">Inner capsid protein</keyword>
<keyword id="KW-1185">Reference proteome</keyword>
<keyword id="KW-0677">Repeat</keyword>
<keyword id="KW-0694">RNA-binding</keyword>
<keyword id="KW-1141">T=2 icosahedral capsid protein</keyword>
<keyword id="KW-0832">Ubl conjugation</keyword>
<keyword id="KW-0946">Virion</keyword>
<organismHost>
    <name type="scientific">Macaca mulatta</name>
    <name type="common">Rhesus macaque</name>
    <dbReference type="NCBI Taxonomy" id="9544"/>
</organismHost>
<organism>
    <name type="scientific">Rotavirus A (strain RVA/SA11-Both/G3P5B[2])</name>
    <name type="common">RV-A</name>
    <name type="synonym">Simian Agent 11 (strain Both)</name>
    <dbReference type="NCBI Taxonomy" id="37137"/>
    <lineage>
        <taxon>Viruses</taxon>
        <taxon>Riboviria</taxon>
        <taxon>Orthornavirae</taxon>
        <taxon>Duplornaviricota</taxon>
        <taxon>Resentoviricetes</taxon>
        <taxon>Reovirales</taxon>
        <taxon>Sedoreoviridae</taxon>
        <taxon>Rotavirus</taxon>
        <taxon>Rotavirus A</taxon>
    </lineage>
</organism>
<feature type="chain" id="PRO_0000149535" description="Inner capsid protein VP2">
    <location>
        <begin position="1"/>
        <end position="881"/>
    </location>
</feature>
<feature type="region of interest" description="5-fold hub; involved in the encapsidation of VP1 and VP3" evidence="1">
    <location>
        <begin position="1"/>
        <end position="82"/>
    </location>
</feature>
<feature type="region of interest" description="Disordered" evidence="2">
    <location>
        <begin position="1"/>
        <end position="46"/>
    </location>
</feature>
<feature type="region of interest" description="Hydrophobic" evidence="1">
    <location>
        <begin position="395"/>
        <end position="415"/>
    </location>
</feature>
<feature type="region of interest" description="Hydrophobic" evidence="1">
    <location>
        <begin position="423"/>
        <end position="443"/>
    </location>
</feature>
<feature type="compositionally biased region" description="Basic and acidic residues" evidence="2">
    <location>
        <begin position="9"/>
        <end position="27"/>
    </location>
</feature>
<feature type="compositionally biased region" description="Polar residues" evidence="2">
    <location>
        <begin position="28"/>
        <end position="39"/>
    </location>
</feature>
<feature type="site" description="Interaction with the intermediate capsid protein VP6" evidence="1">
    <location>
        <position position="221"/>
    </location>
</feature>
<feature type="site" description="Interaction with the intermediate capsid protein VP6" evidence="1">
    <location>
        <position position="225"/>
    </location>
</feature>
<feature type="site" description="Interaction with the intermediate capsid protein VP6" evidence="1">
    <location>
        <position position="229"/>
    </location>
</feature>
<feature type="site" description="Interaction with the intermediate capsid protein VP6" evidence="1">
    <location>
        <position position="840"/>
    </location>
</feature>
<feature type="site" description="Interaction with the intermediate capsid protein VP6" evidence="1">
    <location>
        <position position="842"/>
    </location>
</feature>
<protein>
    <recommendedName>
        <fullName evidence="1">Inner capsid protein VP2</fullName>
    </recommendedName>
</protein>
<proteinExistence type="inferred from homology"/>
<name>VP2_ROTS1</name>
<comment type="function">
    <text evidence="1">Inner capsid protein that self-assembles to form an icosahedral capsid with a T=2 symmetry, which consists of 120 copies of VP2, with channels at each of its five-fold vertices. This capsid constitutes the innermost concentric layer of the viral mature particle. It encapsidates the polymerase VP1, the capping enzyme VP3 and the genomic dsRNA, thereby defining the core. The innermost VP2 capsid and the intermediate VP6 capsid remain intact following cell entry to protect the dsRNA from degradation and to prevent unfavorable antiviral responses in the host cell during all the replication cycle of the virus. Nascent transcripts are transcribed within the structural confines of this double-layered particle (DLP) and are extruded through the channels formed by VP2 N-termini. VP2 is required for the replicase activity of VP1 polymerase. Probably recruits a copy of a VP1-VP3 complex, potentially along with a segment of plus-strand RNA, as a decamer of VP2 assembles. May activate the autoinhibited VP1/RNA complex to coordinate packaging and genome replication.</text>
</comment>
<comment type="subunit">
    <text evidence="1">Homodecamer; each decamer is made up of two conformers of VP2, called VP2A and VP2B. Interacts with a VP1-VP3 complex. Interacts with the intermediate capsid protein VP6. Interacts with NSP5. Interacts (via N-terminus) with NSP2.</text>
</comment>
<comment type="subcellular location">
    <subcellularLocation>
        <location evidence="1">Virion</location>
    </subcellularLocation>
    <text evidence="1">Inner capsid protein. Also found in spherical cytoplasmic structures, called virus factories, that appear early after infection and are the site of viral replication and packaging.</text>
</comment>
<comment type="domain">
    <text evidence="1">The N-terminus binds RNA. It is necessary for encapsidation of VP1 and VP3. The N-termini of 10 VP2 molecules form a cylindrical hub underneath each 5-fold axis of the inner capsid.</text>
</comment>
<comment type="PTM">
    <text evidence="1">Sumoylated with SUMO1 and SUMO2. Sumoylation of viral proteins seems to have a positive role on viral replication.</text>
</comment>
<comment type="similarity">
    <text evidence="1">Belongs to the rotavirus VP2 family.</text>
</comment>
<dbReference type="EMBL" id="X16831">
    <property type="protein sequence ID" value="CAA34733.1"/>
    <property type="molecule type" value="Genomic_RNA"/>
</dbReference>
<dbReference type="PIR" id="B35321">
    <property type="entry name" value="P2XRSR"/>
</dbReference>
<dbReference type="SMR" id="P22672"/>
<dbReference type="Proteomes" id="UP000007180">
    <property type="component" value="Genome"/>
</dbReference>
<dbReference type="GO" id="GO:0039616">
    <property type="term" value="C:T=2 icosahedral viral capsid"/>
    <property type="evidence" value="ECO:0007669"/>
    <property type="project" value="UniProtKB-UniRule"/>
</dbReference>
<dbReference type="GO" id="GO:0039625">
    <property type="term" value="C:viral inner capsid"/>
    <property type="evidence" value="ECO:0007669"/>
    <property type="project" value="UniProtKB-UniRule"/>
</dbReference>
<dbReference type="GO" id="GO:0019013">
    <property type="term" value="C:viral nucleocapsid"/>
    <property type="evidence" value="ECO:0007669"/>
    <property type="project" value="UniProtKB-UniRule"/>
</dbReference>
<dbReference type="GO" id="GO:0003723">
    <property type="term" value="F:RNA binding"/>
    <property type="evidence" value="ECO:0007669"/>
    <property type="project" value="UniProtKB-UniRule"/>
</dbReference>
<dbReference type="HAMAP" id="MF_04123">
    <property type="entry name" value="Rota_VP2"/>
    <property type="match status" value="1"/>
</dbReference>
<dbReference type="HAMAP" id="MF_04127">
    <property type="entry name" value="Rota_VP2_A"/>
    <property type="match status" value="1"/>
</dbReference>
<dbReference type="InterPro" id="IPR007779">
    <property type="entry name" value="Rotavirus_VP2"/>
</dbReference>
<dbReference type="Pfam" id="PF05087">
    <property type="entry name" value="Rota_VP2"/>
    <property type="match status" value="1"/>
</dbReference>
<sequence>MAYRKRGARRETNLKQDERMQEKEDSKNINNDSPKSQLSEKVLSKKEEIITDNQEEVKISDEVKKSNKEESKQLLEVLKTKEEHQKEVQYEILQKTIPTFEPKESILKKLEDIKPEQAKKQTKLFRIFEPKQLPIYRANGERELRNRWYWKLKRDTLPDGDYDVREYFLNLYDQVLMEMPDYLLLKDMAVENKNSRDAGKVVDSETAAICDAIFQDEEPKAVRRFIAEMRQRVQADRNVVNYPSILHPIDHAFNEYFLQHQLVEPLNNVYIFNYIPERIRNDVNYILNMDRNLPSTARYIRPNLLQDRLNLHDNFESLWDTITTSNYILARSVVPDLKELVSTEAQIQKMSQDLQLEALTIQSETQFLTGINSQAANDCFKTLIAAMLSQRTMSLDFVTTNYMSLISGMWLLTVIPNDMFIRESLVACQLAIINTIVYPAFGMQRMHYRNGDPQTPFQIAEQQIQNFQVANWLHFVNYNQFRQVVIDGVLNQVLNDNIRNGHVVNQLMEALMQLSRQQFPTMPVDYKRSIQRGIFLLSNRLGQLVDLTRLLSYINETLMACITMNMQHVQTLTTEKLQLTSVTSLCMLIGNATVIPSPQTLFHYYNVNVNFHSNYNERINDAVAIITAANRLNLYQKKMKSIVEDFLKRLQIFDVARVPDDQMYRLRDRLRLLPVEIRRLDIFNLIAMNMEQIERASDKIAQGVIIAYRDMQLERDEMYGYVNIARNLDGFQQINLEELMRSGDYAQITNMLLNNQPVALVGALPFITDSSVISLIAKLDATVFAQIVKLRKVDTLKPILYKINSDSNDFYLVANYDWIPTSTTKVYKQVPQQFDFRASMHMLTSNLTFTVYSDLLAFVSADTVEPINAVAFDNMRIMNEL</sequence>
<accession>P22672</accession>
<evidence type="ECO:0000255" key="1">
    <source>
        <dbReference type="HAMAP-Rule" id="MF_04127"/>
    </source>
</evidence>
<evidence type="ECO:0000256" key="2">
    <source>
        <dbReference type="SAM" id="MobiDB-lite"/>
    </source>
</evidence>
<reference key="1">
    <citation type="journal article" date="1990" name="Virology">
        <title>Completion of the genomic sequence of the simian rotavirus SA11: nucleotide sequences of segments 1, 2, and 3.</title>
        <authorList>
            <person name="Mitchell D.B."/>
            <person name="Both G.W."/>
        </authorList>
    </citation>
    <scope>NUCLEOTIDE SEQUENCE [GENOMIC RNA]</scope>
</reference>